<accession>Q9ZLS9</accession>
<organism>
    <name type="scientific">Helicobacter pylori (strain J99 / ATCC 700824)</name>
    <name type="common">Campylobacter pylori J99</name>
    <dbReference type="NCBI Taxonomy" id="85963"/>
    <lineage>
        <taxon>Bacteria</taxon>
        <taxon>Pseudomonadati</taxon>
        <taxon>Campylobacterota</taxon>
        <taxon>Epsilonproteobacteria</taxon>
        <taxon>Campylobacterales</taxon>
        <taxon>Helicobacteraceae</taxon>
        <taxon>Helicobacter</taxon>
    </lineage>
</organism>
<comment type="function">
    <text evidence="1">Facilitates transcription termination by a mechanism that involves Rho binding to the nascent RNA, activation of Rho's RNA-dependent ATPase activity, and release of the mRNA from the DNA template.</text>
</comment>
<comment type="subunit">
    <text evidence="1">Homohexamer. The homohexamer assembles into an open ring structure.</text>
</comment>
<comment type="similarity">
    <text evidence="1">Belongs to the Rho family.</text>
</comment>
<evidence type="ECO:0000255" key="1">
    <source>
        <dbReference type="HAMAP-Rule" id="MF_01884"/>
    </source>
</evidence>
<evidence type="ECO:0000255" key="2">
    <source>
        <dbReference type="PROSITE-ProRule" id="PRU01203"/>
    </source>
</evidence>
<name>RHO_HELPJ</name>
<sequence length="438" mass="49545">MNENAPTHKSSHKVKTHTPVSGYHIEDLRTYPTEKLLEIANKLKVENPQEFKRQDLMFEILKTQVTQGGYILFTGILEIMPDGYGFLRGFDGSFSDGHNDTYVSPSQIRRFALRNGDIVTGQVRSPKDQEKYYALLKIEAINYLPSDEIKNRPLFDNLTPLFPDEQIKLEYEPTKVTGRMLDLFSPVGKGQRALIVAPPRTGKTELMKELAQGITSNHPEVELIILLVDERPEEVTDMQRSVKGQVFSSTFDLPANNHIRIAELVLERAKRRVEMGKDVVVLLDSITRLARAYNAVTPSSGKVLSGGVDANALHRPKRFFGAARNIEEGGSLTIIATALIETGSRMDEVIFEEFKGTGNSEIVLARNIADRRIYPAFDILKSGTRKDNILLGKDRLTKVWVLRNVMQQMDDIEALSFVYSKMQQTKDNEEFLNLMNEK</sequence>
<protein>
    <recommendedName>
        <fullName evidence="1">Transcription termination factor Rho</fullName>
        <ecNumber evidence="1">3.6.4.-</ecNumber>
    </recommendedName>
    <alternativeName>
        <fullName evidence="1">ATP-dependent helicase Rho</fullName>
    </alternativeName>
</protein>
<proteinExistence type="inferred from homology"/>
<dbReference type="EC" id="3.6.4.-" evidence="1"/>
<dbReference type="EMBL" id="AE001439">
    <property type="protein sequence ID" value="AAD06075.1"/>
    <property type="molecule type" value="Genomic_DNA"/>
</dbReference>
<dbReference type="PIR" id="D71924">
    <property type="entry name" value="D71924"/>
</dbReference>
<dbReference type="RefSeq" id="WP_001004709.1">
    <property type="nucleotide sequence ID" value="NZ_CP011330.1"/>
</dbReference>
<dbReference type="SMR" id="Q9ZLS9"/>
<dbReference type="KEGG" id="hpj:jhp_0497"/>
<dbReference type="PATRIC" id="fig|85963.30.peg.499"/>
<dbReference type="eggNOG" id="COG1158">
    <property type="taxonomic scope" value="Bacteria"/>
</dbReference>
<dbReference type="Proteomes" id="UP000000804">
    <property type="component" value="Chromosome"/>
</dbReference>
<dbReference type="GO" id="GO:0005524">
    <property type="term" value="F:ATP binding"/>
    <property type="evidence" value="ECO:0007669"/>
    <property type="project" value="UniProtKB-UniRule"/>
</dbReference>
<dbReference type="GO" id="GO:0016887">
    <property type="term" value="F:ATP hydrolysis activity"/>
    <property type="evidence" value="ECO:0007669"/>
    <property type="project" value="InterPro"/>
</dbReference>
<dbReference type="GO" id="GO:0008186">
    <property type="term" value="F:ATP-dependent activity, acting on RNA"/>
    <property type="evidence" value="ECO:0007669"/>
    <property type="project" value="InterPro"/>
</dbReference>
<dbReference type="GO" id="GO:0004386">
    <property type="term" value="F:helicase activity"/>
    <property type="evidence" value="ECO:0007669"/>
    <property type="project" value="UniProtKB-UniRule"/>
</dbReference>
<dbReference type="GO" id="GO:0003723">
    <property type="term" value="F:RNA binding"/>
    <property type="evidence" value="ECO:0007669"/>
    <property type="project" value="UniProtKB-UniRule"/>
</dbReference>
<dbReference type="GO" id="GO:0006353">
    <property type="term" value="P:DNA-templated transcription termination"/>
    <property type="evidence" value="ECO:0007669"/>
    <property type="project" value="UniProtKB-UniRule"/>
</dbReference>
<dbReference type="CDD" id="cd04459">
    <property type="entry name" value="Rho_CSD"/>
    <property type="match status" value="1"/>
</dbReference>
<dbReference type="CDD" id="cd01128">
    <property type="entry name" value="rho_factor_C"/>
    <property type="match status" value="1"/>
</dbReference>
<dbReference type="Gene3D" id="1.10.720.10">
    <property type="match status" value="1"/>
</dbReference>
<dbReference type="Gene3D" id="2.40.50.140">
    <property type="entry name" value="Nucleic acid-binding proteins"/>
    <property type="match status" value="1"/>
</dbReference>
<dbReference type="Gene3D" id="3.40.50.300">
    <property type="entry name" value="P-loop containing nucleotide triphosphate hydrolases"/>
    <property type="match status" value="1"/>
</dbReference>
<dbReference type="HAMAP" id="MF_01884">
    <property type="entry name" value="Rho"/>
    <property type="match status" value="1"/>
</dbReference>
<dbReference type="InterPro" id="IPR003593">
    <property type="entry name" value="AAA+_ATPase"/>
</dbReference>
<dbReference type="InterPro" id="IPR000194">
    <property type="entry name" value="ATPase_F1/V1/A1_a/bsu_nucl-bd"/>
</dbReference>
<dbReference type="InterPro" id="IPR011129">
    <property type="entry name" value="CSD"/>
</dbReference>
<dbReference type="InterPro" id="IPR012340">
    <property type="entry name" value="NA-bd_OB-fold"/>
</dbReference>
<dbReference type="InterPro" id="IPR027417">
    <property type="entry name" value="P-loop_NTPase"/>
</dbReference>
<dbReference type="InterPro" id="IPR011112">
    <property type="entry name" value="Rho-like_N"/>
</dbReference>
<dbReference type="InterPro" id="IPR041703">
    <property type="entry name" value="Rho_factor_ATP-bd"/>
</dbReference>
<dbReference type="InterPro" id="IPR036269">
    <property type="entry name" value="Rho_N_sf"/>
</dbReference>
<dbReference type="InterPro" id="IPR011113">
    <property type="entry name" value="Rho_RNA-bd"/>
</dbReference>
<dbReference type="InterPro" id="IPR004665">
    <property type="entry name" value="Term_rho"/>
</dbReference>
<dbReference type="NCBIfam" id="NF006886">
    <property type="entry name" value="PRK09376.1"/>
    <property type="match status" value="1"/>
</dbReference>
<dbReference type="NCBIfam" id="TIGR00767">
    <property type="entry name" value="rho"/>
    <property type="match status" value="1"/>
</dbReference>
<dbReference type="PANTHER" id="PTHR46425">
    <property type="entry name" value="TRANSCRIPTION TERMINATION FACTOR RHO"/>
    <property type="match status" value="1"/>
</dbReference>
<dbReference type="PANTHER" id="PTHR46425:SF1">
    <property type="entry name" value="TRANSCRIPTION TERMINATION FACTOR RHO"/>
    <property type="match status" value="1"/>
</dbReference>
<dbReference type="Pfam" id="PF00006">
    <property type="entry name" value="ATP-synt_ab"/>
    <property type="match status" value="1"/>
</dbReference>
<dbReference type="Pfam" id="PF07498">
    <property type="entry name" value="Rho_N"/>
    <property type="match status" value="1"/>
</dbReference>
<dbReference type="Pfam" id="PF07497">
    <property type="entry name" value="Rho_RNA_bind"/>
    <property type="match status" value="1"/>
</dbReference>
<dbReference type="SMART" id="SM00382">
    <property type="entry name" value="AAA"/>
    <property type="match status" value="1"/>
</dbReference>
<dbReference type="SMART" id="SM00357">
    <property type="entry name" value="CSP"/>
    <property type="match status" value="1"/>
</dbReference>
<dbReference type="SMART" id="SM00959">
    <property type="entry name" value="Rho_N"/>
    <property type="match status" value="1"/>
</dbReference>
<dbReference type="SUPFAM" id="SSF50249">
    <property type="entry name" value="Nucleic acid-binding proteins"/>
    <property type="match status" value="1"/>
</dbReference>
<dbReference type="SUPFAM" id="SSF52540">
    <property type="entry name" value="P-loop containing nucleoside triphosphate hydrolases"/>
    <property type="match status" value="1"/>
</dbReference>
<dbReference type="SUPFAM" id="SSF68912">
    <property type="entry name" value="Rho N-terminal domain-like"/>
    <property type="match status" value="1"/>
</dbReference>
<dbReference type="PROSITE" id="PS51856">
    <property type="entry name" value="RHO_RNA_BD"/>
    <property type="match status" value="1"/>
</dbReference>
<keyword id="KW-0067">ATP-binding</keyword>
<keyword id="KW-0347">Helicase</keyword>
<keyword id="KW-0378">Hydrolase</keyword>
<keyword id="KW-0547">Nucleotide-binding</keyword>
<keyword id="KW-0694">RNA-binding</keyword>
<keyword id="KW-0804">Transcription</keyword>
<keyword id="KW-0805">Transcription regulation</keyword>
<keyword id="KW-0806">Transcription termination</keyword>
<gene>
    <name evidence="1" type="primary">rho</name>
    <name type="ordered locus">jhp_0497</name>
</gene>
<reference key="1">
    <citation type="journal article" date="1999" name="Nature">
        <title>Genomic sequence comparison of two unrelated isolates of the human gastric pathogen Helicobacter pylori.</title>
        <authorList>
            <person name="Alm R.A."/>
            <person name="Ling L.-S.L."/>
            <person name="Moir D.T."/>
            <person name="King B.L."/>
            <person name="Brown E.D."/>
            <person name="Doig P.C."/>
            <person name="Smith D.R."/>
            <person name="Noonan B."/>
            <person name="Guild B.C."/>
            <person name="deJonge B.L."/>
            <person name="Carmel G."/>
            <person name="Tummino P.J."/>
            <person name="Caruso A."/>
            <person name="Uria-Nickelsen M."/>
            <person name="Mills D.M."/>
            <person name="Ives C."/>
            <person name="Gibson R."/>
            <person name="Merberg D."/>
            <person name="Mills S.D."/>
            <person name="Jiang Q."/>
            <person name="Taylor D.E."/>
            <person name="Vovis G.F."/>
            <person name="Trust T.J."/>
        </authorList>
    </citation>
    <scope>NUCLEOTIDE SEQUENCE [LARGE SCALE GENOMIC DNA]</scope>
    <source>
        <strain>J99 / ATCC 700824</strain>
    </source>
</reference>
<feature type="chain" id="PRO_0000188967" description="Transcription termination factor Rho">
    <location>
        <begin position="1"/>
        <end position="438"/>
    </location>
</feature>
<feature type="domain" description="Rho RNA-BD" evidence="2">
    <location>
        <begin position="70"/>
        <end position="145"/>
    </location>
</feature>
<feature type="binding site" evidence="1">
    <location>
        <begin position="188"/>
        <end position="193"/>
    </location>
    <ligand>
        <name>ATP</name>
        <dbReference type="ChEBI" id="CHEBI:30616"/>
    </ligand>
</feature>
<feature type="binding site" evidence="1">
    <location>
        <begin position="200"/>
        <end position="205"/>
    </location>
    <ligand>
        <name>ATP</name>
        <dbReference type="ChEBI" id="CHEBI:30616"/>
    </ligand>
</feature>
<feature type="binding site" evidence="1">
    <location>
        <position position="231"/>
    </location>
    <ligand>
        <name>ATP</name>
        <dbReference type="ChEBI" id="CHEBI:30616"/>
    </ligand>
</feature>